<name>AQPZ_PHOLL</name>
<dbReference type="EMBL" id="BX571865">
    <property type="protein sequence ID" value="CAE14326.1"/>
    <property type="molecule type" value="Genomic_DNA"/>
</dbReference>
<dbReference type="RefSeq" id="WP_011146289.1">
    <property type="nucleotide sequence ID" value="NC_005126.1"/>
</dbReference>
<dbReference type="SMR" id="Q7N5C1"/>
<dbReference type="STRING" id="243265.plu2033"/>
<dbReference type="GeneID" id="48848308"/>
<dbReference type="KEGG" id="plu:plu2033"/>
<dbReference type="eggNOG" id="COG0580">
    <property type="taxonomic scope" value="Bacteria"/>
</dbReference>
<dbReference type="HOGENOM" id="CLU_020019_3_2_6"/>
<dbReference type="OrthoDB" id="9807293at2"/>
<dbReference type="Proteomes" id="UP000002514">
    <property type="component" value="Chromosome"/>
</dbReference>
<dbReference type="GO" id="GO:0005886">
    <property type="term" value="C:plasma membrane"/>
    <property type="evidence" value="ECO:0007669"/>
    <property type="project" value="UniProtKB-SubCell"/>
</dbReference>
<dbReference type="GO" id="GO:0015250">
    <property type="term" value="F:water channel activity"/>
    <property type="evidence" value="ECO:0007669"/>
    <property type="project" value="UniProtKB-UniRule"/>
</dbReference>
<dbReference type="CDD" id="cd00333">
    <property type="entry name" value="MIP"/>
    <property type="match status" value="1"/>
</dbReference>
<dbReference type="FunFam" id="1.20.1080.10:FF:000007">
    <property type="entry name" value="Aquaporin Z"/>
    <property type="match status" value="1"/>
</dbReference>
<dbReference type="Gene3D" id="1.20.1080.10">
    <property type="entry name" value="Glycerol uptake facilitator protein"/>
    <property type="match status" value="1"/>
</dbReference>
<dbReference type="HAMAP" id="MF_01146">
    <property type="entry name" value="Aquaporin_Z"/>
    <property type="match status" value="1"/>
</dbReference>
<dbReference type="InterPro" id="IPR023271">
    <property type="entry name" value="Aquaporin-like"/>
</dbReference>
<dbReference type="InterPro" id="IPR034294">
    <property type="entry name" value="Aquaporin_transptr"/>
</dbReference>
<dbReference type="InterPro" id="IPR023743">
    <property type="entry name" value="Aquaporin_Z"/>
</dbReference>
<dbReference type="InterPro" id="IPR000425">
    <property type="entry name" value="MIP"/>
</dbReference>
<dbReference type="InterPro" id="IPR022357">
    <property type="entry name" value="MIP_CS"/>
</dbReference>
<dbReference type="NCBIfam" id="TIGR00861">
    <property type="entry name" value="MIP"/>
    <property type="match status" value="1"/>
</dbReference>
<dbReference type="NCBIfam" id="NF003838">
    <property type="entry name" value="PRK05420.1"/>
    <property type="match status" value="1"/>
</dbReference>
<dbReference type="PANTHER" id="PTHR19139">
    <property type="entry name" value="AQUAPORIN TRANSPORTER"/>
    <property type="match status" value="1"/>
</dbReference>
<dbReference type="PANTHER" id="PTHR19139:SF199">
    <property type="entry name" value="MIP17260P"/>
    <property type="match status" value="1"/>
</dbReference>
<dbReference type="Pfam" id="PF00230">
    <property type="entry name" value="MIP"/>
    <property type="match status" value="1"/>
</dbReference>
<dbReference type="PRINTS" id="PR00783">
    <property type="entry name" value="MINTRINSICP"/>
</dbReference>
<dbReference type="SUPFAM" id="SSF81338">
    <property type="entry name" value="Aquaporin-like"/>
    <property type="match status" value="1"/>
</dbReference>
<dbReference type="PROSITE" id="PS00221">
    <property type="entry name" value="MIP"/>
    <property type="match status" value="1"/>
</dbReference>
<protein>
    <recommendedName>
        <fullName evidence="1">Aquaporin Z</fullName>
    </recommendedName>
</protein>
<keyword id="KW-0997">Cell inner membrane</keyword>
<keyword id="KW-1003">Cell membrane</keyword>
<keyword id="KW-0472">Membrane</keyword>
<keyword id="KW-1185">Reference proteome</keyword>
<keyword id="KW-0677">Repeat</keyword>
<keyword id="KW-0812">Transmembrane</keyword>
<keyword id="KW-1133">Transmembrane helix</keyword>
<keyword id="KW-0813">Transport</keyword>
<gene>
    <name evidence="1" type="primary">aqpZ</name>
    <name type="ordered locus">plu2033</name>
</gene>
<evidence type="ECO:0000255" key="1">
    <source>
        <dbReference type="HAMAP-Rule" id="MF_01146"/>
    </source>
</evidence>
<reference key="1">
    <citation type="journal article" date="2003" name="Nat. Biotechnol.">
        <title>The genome sequence of the entomopathogenic bacterium Photorhabdus luminescens.</title>
        <authorList>
            <person name="Duchaud E."/>
            <person name="Rusniok C."/>
            <person name="Frangeul L."/>
            <person name="Buchrieser C."/>
            <person name="Givaudan A."/>
            <person name="Taourit S."/>
            <person name="Bocs S."/>
            <person name="Boursaux-Eude C."/>
            <person name="Chandler M."/>
            <person name="Charles J.-F."/>
            <person name="Dassa E."/>
            <person name="Derose R."/>
            <person name="Derzelle S."/>
            <person name="Freyssinet G."/>
            <person name="Gaudriault S."/>
            <person name="Medigue C."/>
            <person name="Lanois A."/>
            <person name="Powell K."/>
            <person name="Siguier P."/>
            <person name="Vincent R."/>
            <person name="Wingate V."/>
            <person name="Zouine M."/>
            <person name="Glaser P."/>
            <person name="Boemare N."/>
            <person name="Danchin A."/>
            <person name="Kunst F."/>
        </authorList>
    </citation>
    <scope>NUCLEOTIDE SEQUENCE [LARGE SCALE GENOMIC DNA]</scope>
    <source>
        <strain>DSM 15139 / CIP 105565 / TT01</strain>
    </source>
</reference>
<organism>
    <name type="scientific">Photorhabdus laumondii subsp. laumondii (strain DSM 15139 / CIP 105565 / TT01)</name>
    <name type="common">Photorhabdus luminescens subsp. laumondii</name>
    <dbReference type="NCBI Taxonomy" id="243265"/>
    <lineage>
        <taxon>Bacteria</taxon>
        <taxon>Pseudomonadati</taxon>
        <taxon>Pseudomonadota</taxon>
        <taxon>Gammaproteobacteria</taxon>
        <taxon>Enterobacterales</taxon>
        <taxon>Morganellaceae</taxon>
        <taxon>Photorhabdus</taxon>
    </lineage>
</organism>
<accession>Q7N5C1</accession>
<feature type="chain" id="PRO_0000063993" description="Aquaporin Z">
    <location>
        <begin position="1"/>
        <end position="231"/>
    </location>
</feature>
<feature type="transmembrane region" description="Helical" evidence="1">
    <location>
        <begin position="9"/>
        <end position="29"/>
    </location>
</feature>
<feature type="transmembrane region" description="Helical" evidence="1">
    <location>
        <begin position="34"/>
        <end position="54"/>
    </location>
</feature>
<feature type="transmembrane region" description="Helical" evidence="1">
    <location>
        <begin position="82"/>
        <end position="102"/>
    </location>
</feature>
<feature type="transmembrane region" description="Helical" evidence="1">
    <location>
        <begin position="133"/>
        <end position="153"/>
    </location>
</feature>
<feature type="transmembrane region" description="Helical" evidence="1">
    <location>
        <begin position="160"/>
        <end position="180"/>
    </location>
</feature>
<feature type="transmembrane region" description="Helical" evidence="1">
    <location>
        <begin position="202"/>
        <end position="222"/>
    </location>
</feature>
<feature type="short sequence motif" description="NPA 1" evidence="1">
    <location>
        <begin position="63"/>
        <end position="65"/>
    </location>
</feature>
<feature type="short sequence motif" description="NPA 2" evidence="1">
    <location>
        <begin position="186"/>
        <end position="188"/>
    </location>
</feature>
<feature type="site" description="Involved in tetramerization or stability of the tetramer" evidence="1">
    <location>
        <position position="20"/>
    </location>
</feature>
<feature type="site" description="Selectivity filter" evidence="1">
    <location>
        <position position="43"/>
    </location>
</feature>
<feature type="site" description="Selectivity filter" evidence="1">
    <location>
        <position position="183"/>
    </location>
</feature>
<feature type="site" description="Selectivity filter" evidence="1">
    <location>
        <position position="189"/>
    </location>
</feature>
<proteinExistence type="inferred from homology"/>
<comment type="function">
    <text evidence="1">Channel that permits osmotically driven movement of water in both directions. It is involved in the osmoregulation and in the maintenance of cell turgor during volume expansion in rapidly growing cells. It mediates rapid entry or exit of water in response to abrupt changes in osmolarity.</text>
</comment>
<comment type="catalytic activity">
    <reaction evidence="1">
        <text>H2O(in) = H2O(out)</text>
        <dbReference type="Rhea" id="RHEA:29667"/>
        <dbReference type="ChEBI" id="CHEBI:15377"/>
    </reaction>
    <physiologicalReaction direction="left-to-right" evidence="1">
        <dbReference type="Rhea" id="RHEA:29668"/>
    </physiologicalReaction>
    <physiologicalReaction direction="right-to-left" evidence="1">
        <dbReference type="Rhea" id="RHEA:29669"/>
    </physiologicalReaction>
</comment>
<comment type="subunit">
    <text evidence="1">Homotetramer.</text>
</comment>
<comment type="subcellular location">
    <subcellularLocation>
        <location evidence="1">Cell inner membrane</location>
        <topology evidence="1">Multi-pass membrane protein</topology>
    </subcellularLocation>
</comment>
<comment type="domain">
    <text evidence="1">Aquaporins contain two tandem repeats each containing three membrane-spanning domains and a pore-forming loop with the signature motif Asn-Pro-Ala (NPA).</text>
</comment>
<comment type="similarity">
    <text evidence="1">Belongs to the MIP/aquaporin (TC 1.A.8) family.</text>
</comment>
<sequence>MLRKLAAELLGTFVLVFGGCGSVVFAAAFPELGIGFVGVSLAFGLTVLTMIYAVGHISGGHFNPAVTIGLWAGGRFRAVEVIPYIISQVIGGILAAAVLYVIASGQVGFDATTSGFASNGFGEHSPGGFSLQSAIVAEIVLTAIFLIVIIGATDRRAPPGFAPLAIGLALVLINLISIPITNTSVNPARSTAVAIFQNTWALEQLWFFWVMPIIGGIVGGGIYRLLFAEKQ</sequence>